<evidence type="ECO:0000255" key="1">
    <source>
        <dbReference type="HAMAP-Rule" id="MF_00574"/>
    </source>
</evidence>
<evidence type="ECO:0000305" key="2"/>
<reference key="1">
    <citation type="journal article" date="2001" name="Lancet">
        <title>Whole genome sequencing of meticillin-resistant Staphylococcus aureus.</title>
        <authorList>
            <person name="Kuroda M."/>
            <person name="Ohta T."/>
            <person name="Uchiyama I."/>
            <person name="Baba T."/>
            <person name="Yuzawa H."/>
            <person name="Kobayashi I."/>
            <person name="Cui L."/>
            <person name="Oguchi A."/>
            <person name="Aoki K."/>
            <person name="Nagai Y."/>
            <person name="Lian J.-Q."/>
            <person name="Ito T."/>
            <person name="Kanamori M."/>
            <person name="Matsumaru H."/>
            <person name="Maruyama A."/>
            <person name="Murakami H."/>
            <person name="Hosoyama A."/>
            <person name="Mizutani-Ui Y."/>
            <person name="Takahashi N.K."/>
            <person name="Sawano T."/>
            <person name="Inoue R."/>
            <person name="Kaito C."/>
            <person name="Sekimizu K."/>
            <person name="Hirakawa H."/>
            <person name="Kuhara S."/>
            <person name="Goto S."/>
            <person name="Yabuzaki J."/>
            <person name="Kanehisa M."/>
            <person name="Yamashita A."/>
            <person name="Oshima K."/>
            <person name="Furuya K."/>
            <person name="Yoshino C."/>
            <person name="Shiba T."/>
            <person name="Hattori M."/>
            <person name="Ogasawara N."/>
            <person name="Hayashi H."/>
            <person name="Hiramatsu K."/>
        </authorList>
    </citation>
    <scope>NUCLEOTIDE SEQUENCE [LARGE SCALE GENOMIC DNA]</scope>
    <source>
        <strain>N315</strain>
    </source>
</reference>
<sequence>MSKEKVARFNKQHFVVGLKETLKALKKDQVTSLIIAEDVEVYLMTRVLSQINQKNIPVSFFKSKHALGKHVGINVNATIVALIK</sequence>
<accession>P0A0G4</accession>
<accession>Q53602</accession>
<accession>Q99W63</accession>
<protein>
    <recommendedName>
        <fullName evidence="1">RNA-binding protein SA0502</fullName>
    </recommendedName>
    <alternativeName>
        <fullName evidence="2">Putative ribosomal protein L7Ae-like</fullName>
    </alternativeName>
    <alternativeName>
        <fullName evidence="1">Ribosomal protein eL8-like</fullName>
    </alternativeName>
</protein>
<comment type="similarity">
    <text evidence="1">Belongs to the eukaryotic ribosomal protein eL8 family.</text>
</comment>
<gene>
    <name type="ordered locus">SA0502</name>
</gene>
<organism>
    <name type="scientific">Staphylococcus aureus (strain N315)</name>
    <dbReference type="NCBI Taxonomy" id="158879"/>
    <lineage>
        <taxon>Bacteria</taxon>
        <taxon>Bacillati</taxon>
        <taxon>Bacillota</taxon>
        <taxon>Bacilli</taxon>
        <taxon>Bacillales</taxon>
        <taxon>Staphylococcaceae</taxon>
        <taxon>Staphylococcus</taxon>
    </lineage>
</organism>
<keyword id="KW-0694">RNA-binding</keyword>
<dbReference type="EMBL" id="BA000018">
    <property type="protein sequence ID" value="BAB41733.1"/>
    <property type="molecule type" value="Genomic_DNA"/>
</dbReference>
<dbReference type="PIR" id="B89822">
    <property type="entry name" value="B89822"/>
</dbReference>
<dbReference type="RefSeq" id="WP_000031892.1">
    <property type="nucleotide sequence ID" value="NC_002745.2"/>
</dbReference>
<dbReference type="SMR" id="P0A0G4"/>
<dbReference type="EnsemblBacteria" id="BAB41733">
    <property type="protein sequence ID" value="BAB41733"/>
    <property type="gene ID" value="BAB41733"/>
</dbReference>
<dbReference type="KEGG" id="sau:SA0502"/>
<dbReference type="HOGENOM" id="CLU_168063_0_0_9"/>
<dbReference type="GO" id="GO:0003723">
    <property type="term" value="F:RNA binding"/>
    <property type="evidence" value="ECO:0007669"/>
    <property type="project" value="UniProtKB-UniRule"/>
</dbReference>
<dbReference type="Gene3D" id="3.30.1330.30">
    <property type="match status" value="1"/>
</dbReference>
<dbReference type="HAMAP" id="MF_00574">
    <property type="entry name" value="Ribosomal_eL8_Bact"/>
    <property type="match status" value="1"/>
</dbReference>
<dbReference type="InterPro" id="IPR029064">
    <property type="entry name" value="Ribosomal_eL30-like_sf"/>
</dbReference>
<dbReference type="InterPro" id="IPR004038">
    <property type="entry name" value="Ribosomal_eL8/eL30/eS12/Gad45"/>
</dbReference>
<dbReference type="InterPro" id="IPR023460">
    <property type="entry name" value="RNA_bf_YbxF-like"/>
</dbReference>
<dbReference type="NCBIfam" id="NF010123">
    <property type="entry name" value="PRK13600.1"/>
    <property type="match status" value="1"/>
</dbReference>
<dbReference type="Pfam" id="PF01248">
    <property type="entry name" value="Ribosomal_L7Ae"/>
    <property type="match status" value="1"/>
</dbReference>
<dbReference type="SUPFAM" id="SSF55315">
    <property type="entry name" value="L30e-like"/>
    <property type="match status" value="1"/>
</dbReference>
<feature type="chain" id="PRO_0000136817" description="RNA-binding protein SA0502">
    <location>
        <begin position="1"/>
        <end position="84"/>
    </location>
</feature>
<name>RXL7_STAAN</name>
<proteinExistence type="inferred from homology"/>